<keyword id="KW-0007">Acetylation</keyword>
<keyword id="KW-0903">Direct protein sequencing</keyword>
<keyword id="KW-0274">FAD</keyword>
<keyword id="KW-0276">Fatty acid metabolism</keyword>
<keyword id="KW-0285">Flavoprotein</keyword>
<keyword id="KW-0443">Lipid metabolism</keyword>
<keyword id="KW-0496">Mitochondrion</keyword>
<keyword id="KW-0560">Oxidoreductase</keyword>
<keyword id="KW-0597">Phosphoprotein</keyword>
<keyword id="KW-1185">Reference proteome</keyword>
<keyword id="KW-0809">Transit peptide</keyword>
<comment type="function">
    <text evidence="1 3 4 5">Short and branched chain specific acyl-CoA dehydrogenase that catalyzes the removal of one hydrogen from C-2 and C-3 of the fatty acyl-CoA thioester, resulting in the formation of trans-2-enoyl-CoA (PubMed:12855692, PubMed:6874697, PubMed:8660691). Among the different mitochondrial acyl-CoA dehydrogenases, acts specifically on short and branched chain acyl-CoA derivatives such as (S)-2-methylbutyryl-CoA as well as short straight chain acyl-CoAs such as butyryl-CoA (PubMed:12855692, PubMed:6874697, PubMed:8660691). Plays an important role in the metabolism of L-isoleucine by catalyzing the dehydrogenation of 2-methylbutyryl-CoA, one of the steps of the L-isoleucine catabolic pathway (By similarity). Can also act on valproyl-CoA, a metabolite of the valproic acid drug (PubMed:8660691).</text>
</comment>
<comment type="catalytic activity">
    <reaction evidence="4 5">
        <text>2-methylbutanoyl-CoA + oxidized [electron-transfer flavoprotein] + H(+) = (2E)-2-methylbut-2-enoyl-CoA + reduced [electron-transfer flavoprotein]</text>
        <dbReference type="Rhea" id="RHEA:43780"/>
        <dbReference type="Rhea" id="RHEA-COMP:10685"/>
        <dbReference type="Rhea" id="RHEA-COMP:10686"/>
        <dbReference type="ChEBI" id="CHEBI:15378"/>
        <dbReference type="ChEBI" id="CHEBI:57336"/>
        <dbReference type="ChEBI" id="CHEBI:57337"/>
        <dbReference type="ChEBI" id="CHEBI:57692"/>
        <dbReference type="ChEBI" id="CHEBI:58307"/>
        <dbReference type="EC" id="1.3.8.5"/>
    </reaction>
    <physiologicalReaction direction="left-to-right" evidence="10">
        <dbReference type="Rhea" id="RHEA:43781"/>
    </physiologicalReaction>
</comment>
<comment type="catalytic activity">
    <reaction evidence="3 4 5">
        <text>(2S)-2-methylbutanoyl-CoA + oxidized [electron-transfer flavoprotein] + H(+) = (2E)-2-methylbut-2-enoyl-CoA + reduced [electron-transfer flavoprotein]</text>
        <dbReference type="Rhea" id="RHEA:48256"/>
        <dbReference type="Rhea" id="RHEA-COMP:10685"/>
        <dbReference type="Rhea" id="RHEA-COMP:10686"/>
        <dbReference type="ChEBI" id="CHEBI:15378"/>
        <dbReference type="ChEBI" id="CHEBI:57337"/>
        <dbReference type="ChEBI" id="CHEBI:57692"/>
        <dbReference type="ChEBI" id="CHEBI:58307"/>
        <dbReference type="ChEBI" id="CHEBI:88166"/>
    </reaction>
    <physiologicalReaction direction="left-to-right" evidence="10">
        <dbReference type="Rhea" id="RHEA:48257"/>
    </physiologicalReaction>
</comment>
<comment type="catalytic activity">
    <reaction evidence="4 5">
        <text>(2R)-2-methylbutanoyl-CoA + oxidized [electron-transfer flavoprotein] + H(+) = ethylacryloyl-CoA + reduced [electron-transfer flavoprotein]</text>
        <dbReference type="Rhea" id="RHEA:65296"/>
        <dbReference type="Rhea" id="RHEA-COMP:10685"/>
        <dbReference type="Rhea" id="RHEA-COMP:10686"/>
        <dbReference type="ChEBI" id="CHEBI:15378"/>
        <dbReference type="ChEBI" id="CHEBI:57692"/>
        <dbReference type="ChEBI" id="CHEBI:58307"/>
        <dbReference type="ChEBI" id="CHEBI:156439"/>
        <dbReference type="ChEBI" id="CHEBI:156440"/>
    </reaction>
    <physiologicalReaction direction="left-to-right" evidence="10">
        <dbReference type="Rhea" id="RHEA:65297"/>
    </physiologicalReaction>
</comment>
<comment type="catalytic activity">
    <reaction evidence="4 5">
        <text>butanoyl-CoA + oxidized [electron-transfer flavoprotein] + H(+) = (2E)-butenoyl-CoA + reduced [electron-transfer flavoprotein]</text>
        <dbReference type="Rhea" id="RHEA:24004"/>
        <dbReference type="Rhea" id="RHEA-COMP:10685"/>
        <dbReference type="Rhea" id="RHEA-COMP:10686"/>
        <dbReference type="ChEBI" id="CHEBI:15378"/>
        <dbReference type="ChEBI" id="CHEBI:57332"/>
        <dbReference type="ChEBI" id="CHEBI:57371"/>
        <dbReference type="ChEBI" id="CHEBI:57692"/>
        <dbReference type="ChEBI" id="CHEBI:58307"/>
    </reaction>
    <physiologicalReaction direction="left-to-right" evidence="10">
        <dbReference type="Rhea" id="RHEA:24005"/>
    </physiologicalReaction>
</comment>
<comment type="catalytic activity">
    <reaction evidence="3 4 5">
        <text>2-methylpropanoyl-CoA + oxidized [electron-transfer flavoprotein] + H(+) = 2-methylpropenoyl-CoA + reduced [electron-transfer flavoprotein]</text>
        <dbReference type="Rhea" id="RHEA:44180"/>
        <dbReference type="Rhea" id="RHEA-COMP:10685"/>
        <dbReference type="Rhea" id="RHEA-COMP:10686"/>
        <dbReference type="ChEBI" id="CHEBI:15378"/>
        <dbReference type="ChEBI" id="CHEBI:57338"/>
        <dbReference type="ChEBI" id="CHEBI:57692"/>
        <dbReference type="ChEBI" id="CHEBI:58307"/>
        <dbReference type="ChEBI" id="CHEBI:62500"/>
    </reaction>
    <physiologicalReaction direction="left-to-right" evidence="10">
        <dbReference type="Rhea" id="RHEA:44181"/>
    </physiologicalReaction>
</comment>
<comment type="catalytic activity">
    <reaction evidence="3">
        <text>hexanoyl-CoA + oxidized [electron-transfer flavoprotein] + H(+) = (2E)-hexenoyl-CoA + reduced [electron-transfer flavoprotein]</text>
        <dbReference type="Rhea" id="RHEA:43464"/>
        <dbReference type="Rhea" id="RHEA-COMP:10685"/>
        <dbReference type="Rhea" id="RHEA-COMP:10686"/>
        <dbReference type="ChEBI" id="CHEBI:15378"/>
        <dbReference type="ChEBI" id="CHEBI:57692"/>
        <dbReference type="ChEBI" id="CHEBI:58307"/>
        <dbReference type="ChEBI" id="CHEBI:62077"/>
        <dbReference type="ChEBI" id="CHEBI:62620"/>
    </reaction>
    <physiologicalReaction direction="left-to-right" evidence="8">
        <dbReference type="Rhea" id="RHEA:43465"/>
    </physiologicalReaction>
</comment>
<comment type="catalytic activity">
    <reaction evidence="5">
        <text>valproyl-CoA + oxidized [electron-transfer flavoprotein] + H(+) = (2E)-2-propylpent-2-enoyl-CoA + reduced [electron-transfer flavoprotein]</text>
        <dbReference type="Rhea" id="RHEA:65344"/>
        <dbReference type="Rhea" id="RHEA-COMP:10685"/>
        <dbReference type="Rhea" id="RHEA-COMP:10686"/>
        <dbReference type="ChEBI" id="CHEBI:15378"/>
        <dbReference type="ChEBI" id="CHEBI:57692"/>
        <dbReference type="ChEBI" id="CHEBI:58307"/>
        <dbReference type="ChEBI" id="CHEBI:156457"/>
        <dbReference type="ChEBI" id="CHEBI:156458"/>
    </reaction>
    <physiologicalReaction direction="left-to-right" evidence="10">
        <dbReference type="Rhea" id="RHEA:65345"/>
    </physiologicalReaction>
</comment>
<comment type="cofactor">
    <cofactor evidence="4">
        <name>FAD</name>
        <dbReference type="ChEBI" id="CHEBI:57692"/>
    </cofactor>
</comment>
<comment type="activity regulation">
    <text evidence="4">Inhibited by N-ethylmaleimide, hydroxymercuribenzoate, methyl mercury iodide and heavy metals such as Hg2+, Cu2+, and Ag2+.</text>
</comment>
<comment type="biophysicochemical properties">
    <kinetics>
        <KM evidence="4">89 uM for 2-methylpropanoyl-CoA</KM>
        <KM evidence="4">20 uM for (2S)-2-methylbutanoyl-CoA</KM>
        <KM evidence="3">3.9 uM for (2S)-2-methylbutanoyl-CoA (at 32 degrees Celsius)</KM>
        <KM evidence="3">44 uM for hexanoyl-CoA (at 32 degrees Celsius)</KM>
        <KM evidence="3">110 uM for 2-methylpropanoyl-CoA (at 32 degrees Celsius)</KM>
        <Vmax evidence="4">2.0 umol/min/mg enzyme with 2-methylpropanoyl-CoA as substrate</Vmax>
        <Vmax evidence="4">2.2 umol/min/mg enzyme with (2S)-2-methylbutanoyl-CoA as substrate</Vmax>
        <text evidence="3">kcat is 30000 sec(-1) for the dehydrogenation of (2S)-2-methylbutanoyl-CoA (PubMed:12855692). kcat is 1800 sec(-1) for the dehydrogenation of hexanoyl-CoA (PubMed:12855692). kcat is 8500 sec(-1) for the dehydrogenation of hexanoyl-CoA (PubMed:12855692).</text>
    </kinetics>
    <phDependence>
        <text evidence="4">Optimum pH is 8.0.</text>
    </phDependence>
</comment>
<comment type="pathway">
    <text evidence="4 5">Lipid metabolism; mitochondrial fatty acid beta-oxidation.</text>
</comment>
<comment type="pathway">
    <text evidence="1">Amino-acid degradation; L-isoleucine degradation.</text>
</comment>
<comment type="subunit">
    <text evidence="4">Homotetramer.</text>
</comment>
<comment type="subcellular location">
    <subcellularLocation>
        <location evidence="4">Mitochondrion matrix</location>
    </subcellularLocation>
</comment>
<comment type="tissue specificity">
    <text evidence="5">Ubiquitously expressed.</text>
</comment>
<comment type="similarity">
    <text evidence="7">Belongs to the acyl-CoA dehydrogenase family.</text>
</comment>
<proteinExistence type="evidence at protein level"/>
<dbReference type="EC" id="1.3.8.5" evidence="4 5"/>
<dbReference type="EMBL" id="U64451">
    <property type="protein sequence ID" value="AAB17136.1"/>
    <property type="molecule type" value="mRNA"/>
</dbReference>
<dbReference type="PIR" id="S71321">
    <property type="entry name" value="S71321"/>
</dbReference>
<dbReference type="RefSeq" id="NP_037216.1">
    <property type="nucleotide sequence ID" value="NM_013084.2"/>
</dbReference>
<dbReference type="SMR" id="P70584"/>
<dbReference type="FunCoup" id="P70584">
    <property type="interactions" value="2132"/>
</dbReference>
<dbReference type="STRING" id="10116.ENSRNOP00000027999"/>
<dbReference type="SwissLipids" id="SLP:000001390"/>
<dbReference type="iPTMnet" id="P70584"/>
<dbReference type="PhosphoSitePlus" id="P70584"/>
<dbReference type="PaxDb" id="10116-ENSRNOP00000027999"/>
<dbReference type="DNASU" id="25618"/>
<dbReference type="Ensembl" id="ENSRNOT00000112423.1">
    <property type="protein sequence ID" value="ENSRNOP00000092354.1"/>
    <property type="gene ID" value="ENSRNOG00000020624.5"/>
</dbReference>
<dbReference type="GeneID" id="25618"/>
<dbReference type="KEGG" id="rno:25618"/>
<dbReference type="UCSC" id="RGD:2013">
    <property type="organism name" value="rat"/>
</dbReference>
<dbReference type="AGR" id="RGD:2013"/>
<dbReference type="CTD" id="36"/>
<dbReference type="RGD" id="2013">
    <property type="gene designation" value="Acadsb"/>
</dbReference>
<dbReference type="eggNOG" id="KOG0139">
    <property type="taxonomic scope" value="Eukaryota"/>
</dbReference>
<dbReference type="GeneTree" id="ENSGT00940000156525"/>
<dbReference type="InParanoid" id="P70584"/>
<dbReference type="PhylomeDB" id="P70584"/>
<dbReference type="TreeFam" id="TF105055"/>
<dbReference type="BioCyc" id="MetaCyc:MONOMER-11692"/>
<dbReference type="Reactome" id="R-RNO-70895">
    <property type="pathway name" value="Branched-chain amino acid catabolism"/>
</dbReference>
<dbReference type="Reactome" id="R-RNO-9837999">
    <property type="pathway name" value="Mitochondrial protein degradation"/>
</dbReference>
<dbReference type="SABIO-RK" id="P70584"/>
<dbReference type="UniPathway" id="UPA00364"/>
<dbReference type="UniPathway" id="UPA00660"/>
<dbReference type="PRO" id="PR:P70584"/>
<dbReference type="Proteomes" id="UP000002494">
    <property type="component" value="Chromosome 1"/>
</dbReference>
<dbReference type="GO" id="GO:0005759">
    <property type="term" value="C:mitochondrial matrix"/>
    <property type="evidence" value="ECO:0007669"/>
    <property type="project" value="UniProtKB-SubCell"/>
</dbReference>
<dbReference type="GO" id="GO:0005739">
    <property type="term" value="C:mitochondrion"/>
    <property type="evidence" value="ECO:0000250"/>
    <property type="project" value="UniProtKB"/>
</dbReference>
<dbReference type="GO" id="GO:0003995">
    <property type="term" value="F:acyl-CoA dehydrogenase activity"/>
    <property type="evidence" value="ECO:0000314"/>
    <property type="project" value="RGD"/>
</dbReference>
<dbReference type="GO" id="GO:0009055">
    <property type="term" value="F:electron transfer activity"/>
    <property type="evidence" value="ECO:0000314"/>
    <property type="project" value="RGD"/>
</dbReference>
<dbReference type="GO" id="GO:0050660">
    <property type="term" value="F:flavin adenine dinucleotide binding"/>
    <property type="evidence" value="ECO:0007669"/>
    <property type="project" value="InterPro"/>
</dbReference>
<dbReference type="GO" id="GO:0042802">
    <property type="term" value="F:identical protein binding"/>
    <property type="evidence" value="ECO:0000250"/>
    <property type="project" value="UniProtKB"/>
</dbReference>
<dbReference type="GO" id="GO:0003853">
    <property type="term" value="F:short-chain 2-methyl fatty acyl-CoA dehydrogenase activity"/>
    <property type="evidence" value="ECO:0000250"/>
    <property type="project" value="UniProtKB"/>
</dbReference>
<dbReference type="GO" id="GO:0016937">
    <property type="term" value="F:short-chain fatty acyl-CoA dehydrogenase activity"/>
    <property type="evidence" value="ECO:0000314"/>
    <property type="project" value="MGI"/>
</dbReference>
<dbReference type="GO" id="GO:0006637">
    <property type="term" value="P:acyl-CoA metabolic process"/>
    <property type="evidence" value="ECO:0000314"/>
    <property type="project" value="MGI"/>
</dbReference>
<dbReference type="GO" id="GO:0006635">
    <property type="term" value="P:fatty acid beta-oxidation"/>
    <property type="evidence" value="ECO:0000304"/>
    <property type="project" value="RGD"/>
</dbReference>
<dbReference type="GO" id="GO:0006631">
    <property type="term" value="P:fatty acid metabolic process"/>
    <property type="evidence" value="ECO:0000250"/>
    <property type="project" value="UniProtKB"/>
</dbReference>
<dbReference type="GO" id="GO:0006550">
    <property type="term" value="P:isoleucine catabolic process"/>
    <property type="evidence" value="ECO:0000250"/>
    <property type="project" value="UniProtKB"/>
</dbReference>
<dbReference type="CDD" id="cd01158">
    <property type="entry name" value="SCAD_SBCAD"/>
    <property type="match status" value="1"/>
</dbReference>
<dbReference type="FunFam" id="1.10.540.10:FF:000012">
    <property type="entry name" value="Acyl-CoA dehydrogenase short/branched chain"/>
    <property type="match status" value="1"/>
</dbReference>
<dbReference type="FunFam" id="1.20.140.10:FF:000002">
    <property type="entry name" value="Acyl-CoA dehydrogenase short/branched chain"/>
    <property type="match status" value="1"/>
</dbReference>
<dbReference type="FunFam" id="2.40.110.10:FF:000001">
    <property type="entry name" value="Acyl-CoA dehydrogenase, mitochondrial"/>
    <property type="match status" value="1"/>
</dbReference>
<dbReference type="Gene3D" id="1.10.540.10">
    <property type="entry name" value="Acyl-CoA dehydrogenase/oxidase, N-terminal domain"/>
    <property type="match status" value="1"/>
</dbReference>
<dbReference type="Gene3D" id="2.40.110.10">
    <property type="entry name" value="Butyryl-CoA Dehydrogenase, subunit A, domain 2"/>
    <property type="match status" value="1"/>
</dbReference>
<dbReference type="Gene3D" id="1.20.140.10">
    <property type="entry name" value="Butyryl-CoA Dehydrogenase, subunit A, domain 3"/>
    <property type="match status" value="1"/>
</dbReference>
<dbReference type="InterPro" id="IPR006089">
    <property type="entry name" value="Acyl-CoA_DH_CS"/>
</dbReference>
<dbReference type="InterPro" id="IPR006091">
    <property type="entry name" value="Acyl-CoA_Oxase/DH_mid-dom"/>
</dbReference>
<dbReference type="InterPro" id="IPR046373">
    <property type="entry name" value="Acyl-CoA_Oxase/DH_mid-dom_sf"/>
</dbReference>
<dbReference type="InterPro" id="IPR036250">
    <property type="entry name" value="AcylCo_DH-like_C"/>
</dbReference>
<dbReference type="InterPro" id="IPR009075">
    <property type="entry name" value="AcylCo_DH/oxidase_C"/>
</dbReference>
<dbReference type="InterPro" id="IPR013786">
    <property type="entry name" value="AcylCoA_DH/ox_N"/>
</dbReference>
<dbReference type="InterPro" id="IPR037069">
    <property type="entry name" value="AcylCoA_DH/ox_N_sf"/>
</dbReference>
<dbReference type="InterPro" id="IPR009100">
    <property type="entry name" value="AcylCoA_DH/oxidase_NM_dom_sf"/>
</dbReference>
<dbReference type="PANTHER" id="PTHR43884">
    <property type="entry name" value="ACYL-COA DEHYDROGENASE"/>
    <property type="match status" value="1"/>
</dbReference>
<dbReference type="PANTHER" id="PTHR43884:SF1">
    <property type="entry name" value="SHORT_BRANCHED CHAIN SPECIFIC ACYL-COA DEHYDROGENASE, MITOCHONDRIAL"/>
    <property type="match status" value="1"/>
</dbReference>
<dbReference type="Pfam" id="PF00441">
    <property type="entry name" value="Acyl-CoA_dh_1"/>
    <property type="match status" value="1"/>
</dbReference>
<dbReference type="Pfam" id="PF02770">
    <property type="entry name" value="Acyl-CoA_dh_M"/>
    <property type="match status" value="1"/>
</dbReference>
<dbReference type="Pfam" id="PF02771">
    <property type="entry name" value="Acyl-CoA_dh_N"/>
    <property type="match status" value="1"/>
</dbReference>
<dbReference type="SUPFAM" id="SSF47203">
    <property type="entry name" value="Acyl-CoA dehydrogenase C-terminal domain-like"/>
    <property type="match status" value="1"/>
</dbReference>
<dbReference type="SUPFAM" id="SSF56645">
    <property type="entry name" value="Acyl-CoA dehydrogenase NM domain-like"/>
    <property type="match status" value="1"/>
</dbReference>
<dbReference type="PROSITE" id="PS00072">
    <property type="entry name" value="ACYL_COA_DH_1"/>
    <property type="match status" value="1"/>
</dbReference>
<dbReference type="PROSITE" id="PS00073">
    <property type="entry name" value="ACYL_COA_DH_2"/>
    <property type="match status" value="1"/>
</dbReference>
<reference key="1">
    <citation type="journal article" date="1996" name="Arch. Biochem. Biophys.">
        <title>Cloning of a cDNA for short/branched chain acyl-Coenzyme A dehydrogenase from rat and characterization of its tissue expression and substrate specificity.</title>
        <authorList>
            <person name="Willard J."/>
            <person name="Vicanek C."/>
            <person name="Battaile K.P."/>
            <person name="van Veldhoven P.P."/>
            <person name="Fauq A.H."/>
            <person name="Rozen R."/>
            <person name="Vockley J."/>
        </authorList>
    </citation>
    <scope>NUCLEOTIDE SEQUENCE [MRNA]</scope>
    <scope>PROTEIN SEQUENCE OF 51-59</scope>
    <scope>FUNCTION</scope>
    <scope>CATALYTIC ACTIVITY</scope>
    <scope>PATHWAY</scope>
    <scope>SUBSTRATE SPECIFICITY</scope>
    <scope>TISSUE SPECIFICITY</scope>
    <source>
        <strain>Sprague-Dawley</strain>
        <tissue>Liver</tissue>
    </source>
</reference>
<reference key="2">
    <citation type="journal article" date="1983" name="J. Biol. Chem.">
        <title>Purification and characterization of 2-methyl-branched chain acyl coenzyme A dehydrogenase, an enzyme involved in the isoleucine and valine metabolism, from rat liver mitochondria.</title>
        <authorList>
            <person name="Ikeda Y."/>
            <person name="Tanaka K."/>
        </authorList>
    </citation>
    <scope>FUNCTION</scope>
    <scope>CATALYTIC ACTIVITY</scope>
    <scope>PATHWAY</scope>
    <scope>COFACTOR</scope>
    <scope>ACTIVITY REGULATION</scope>
    <scope>BIOPHYSICOCHEMICAL PROPERTIES</scope>
    <scope>SUBSTRATE SPECIFICITY</scope>
    <scope>SUBUNIT</scope>
    <scope>SUBCELLULAR LOCATION</scope>
</reference>
<reference key="3">
    <citation type="journal article" date="2003" name="J. Biol. Chem.">
        <title>A novel approach to the characterization of substrate specificity in short/branched chain Acyl-CoA dehydrogenase.</title>
        <authorList>
            <person name="He M."/>
            <person name="Burghardt T.P."/>
            <person name="Vockley J."/>
        </authorList>
    </citation>
    <scope>FUNCTION</scope>
    <scope>CATALYTIC ACTIVITY</scope>
    <scope>BIOPHYSICOCHEMICAL PROPERTIES</scope>
    <scope>SUBSTRATE SPECIFICITY</scope>
</reference>
<evidence type="ECO:0000250" key="1">
    <source>
        <dbReference type="UniProtKB" id="P45954"/>
    </source>
</evidence>
<evidence type="ECO:0000250" key="2">
    <source>
        <dbReference type="UniProtKB" id="Q9DBL1"/>
    </source>
</evidence>
<evidence type="ECO:0000269" key="3">
    <source>
    </source>
</evidence>
<evidence type="ECO:0000269" key="4">
    <source>
    </source>
</evidence>
<evidence type="ECO:0000269" key="5">
    <source>
    </source>
</evidence>
<evidence type="ECO:0000303" key="6">
    <source>
    </source>
</evidence>
<evidence type="ECO:0000305" key="7"/>
<evidence type="ECO:0000305" key="8">
    <source>
    </source>
</evidence>
<evidence type="ECO:0000305" key="9">
    <source>
    </source>
</evidence>
<evidence type="ECO:0000305" key="10">
    <source>
    </source>
</evidence>
<evidence type="ECO:0000312" key="11">
    <source>
        <dbReference type="RGD" id="2013"/>
    </source>
</evidence>
<protein>
    <recommendedName>
        <fullName evidence="9">Short/branched chain specific acyl-CoA dehydrogenase, mitochondrial</fullName>
        <shortName evidence="6">SBCAD</shortName>
        <ecNumber evidence="4 5">1.3.8.5</ecNumber>
    </recommendedName>
    <alternativeName>
        <fullName>2-methyl branched chain acyl-CoA dehydrogenase</fullName>
        <shortName>2-MEBCAD</shortName>
    </alternativeName>
    <alternativeName>
        <fullName>2-methylbutyryl-coenzyme A dehydrogenase</fullName>
        <shortName>2-methylbutyryl-CoA dehydrogenase</shortName>
    </alternativeName>
</protein>
<accession>P70584</accession>
<gene>
    <name evidence="11" type="primary">Acadsb</name>
</gene>
<feature type="transit peptide" description="Mitochondrion" evidence="1">
    <location>
        <begin position="1"/>
        <end position="33"/>
    </location>
</feature>
<feature type="chain" id="PRO_0000000521" description="Short/branched chain specific acyl-CoA dehydrogenase, mitochondrial">
    <location>
        <begin position="34"/>
        <end position="432"/>
    </location>
</feature>
<feature type="active site" description="Proton acceptor" evidence="1">
    <location>
        <position position="414"/>
    </location>
</feature>
<feature type="binding site" description="in other chain" evidence="1">
    <location>
        <begin position="174"/>
        <end position="183"/>
    </location>
    <ligand>
        <name>FAD</name>
        <dbReference type="ChEBI" id="CHEBI:57692"/>
        <note>ligand shared between dimeric partners</note>
    </ligand>
</feature>
<feature type="binding site" evidence="1">
    <location>
        <position position="183"/>
    </location>
    <ligand>
        <name>substrate</name>
    </ligand>
</feature>
<feature type="binding site" description="in other chain" evidence="1">
    <location>
        <begin position="207"/>
        <end position="209"/>
    </location>
    <ligand>
        <name>FAD</name>
        <dbReference type="ChEBI" id="CHEBI:57692"/>
        <note>ligand shared between dimeric partners</note>
    </ligand>
</feature>
<feature type="binding site" evidence="1">
    <location>
        <position position="229"/>
    </location>
    <ligand>
        <name>substrate</name>
    </ligand>
</feature>
<feature type="binding site" evidence="1">
    <location>
        <position position="283"/>
    </location>
    <ligand>
        <name>substrate</name>
    </ligand>
</feature>
<feature type="binding site" evidence="1">
    <location>
        <begin position="291"/>
        <end position="294"/>
    </location>
    <ligand>
        <name>substrate</name>
    </ligand>
</feature>
<feature type="binding site" evidence="1">
    <location>
        <position position="319"/>
    </location>
    <ligand>
        <name>FAD</name>
        <dbReference type="ChEBI" id="CHEBI:57692"/>
        <note>ligand shared between dimeric partners</note>
    </ligand>
</feature>
<feature type="binding site" evidence="1">
    <location>
        <position position="330"/>
    </location>
    <ligand>
        <name>FAD</name>
        <dbReference type="ChEBI" id="CHEBI:57692"/>
        <note>ligand shared between dimeric partners</note>
    </ligand>
</feature>
<feature type="binding site" evidence="1">
    <location>
        <begin position="387"/>
        <end position="391"/>
    </location>
    <ligand>
        <name>FAD</name>
        <dbReference type="ChEBI" id="CHEBI:57692"/>
        <note>ligand shared between dimeric partners</note>
    </ligand>
</feature>
<feature type="binding site" description="in other chain" evidence="1">
    <location>
        <begin position="416"/>
        <end position="418"/>
    </location>
    <ligand>
        <name>FAD</name>
        <dbReference type="ChEBI" id="CHEBI:57692"/>
        <note>ligand shared between dimeric partners</note>
    </ligand>
</feature>
<feature type="modified residue" description="N6-acetyllysine; alternate" evidence="2">
    <location>
        <position position="70"/>
    </location>
</feature>
<feature type="modified residue" description="N6-succinyllysine; alternate" evidence="2">
    <location>
        <position position="70"/>
    </location>
</feature>
<feature type="modified residue" description="Phosphoserine" evidence="1">
    <location>
        <position position="183"/>
    </location>
</feature>
<feature type="modified residue" description="N6-succinyllysine" evidence="2">
    <location>
        <position position="278"/>
    </location>
</feature>
<feature type="modified residue" description="N6-acetyllysine; alternate" evidence="1">
    <location>
        <position position="284"/>
    </location>
</feature>
<feature type="modified residue" description="N6-succinyllysine; alternate" evidence="2">
    <location>
        <position position="284"/>
    </location>
</feature>
<feature type="modified residue" description="N6-acetyllysine" evidence="2">
    <location>
        <position position="426"/>
    </location>
</feature>
<organism>
    <name type="scientific">Rattus norvegicus</name>
    <name type="common">Rat</name>
    <dbReference type="NCBI Taxonomy" id="10116"/>
    <lineage>
        <taxon>Eukaryota</taxon>
        <taxon>Metazoa</taxon>
        <taxon>Chordata</taxon>
        <taxon>Craniata</taxon>
        <taxon>Vertebrata</taxon>
        <taxon>Euteleostomi</taxon>
        <taxon>Mammalia</taxon>
        <taxon>Eutheria</taxon>
        <taxon>Euarchontoglires</taxon>
        <taxon>Glires</taxon>
        <taxon>Rodentia</taxon>
        <taxon>Myomorpha</taxon>
        <taxon>Muroidea</taxon>
        <taxon>Muridae</taxon>
        <taxon>Murinae</taxon>
        <taxon>Rattus</taxon>
    </lineage>
</organism>
<sequence>MAVSAFQLWRAGGLLRRNFLTHSSSWKIPPRVLKSSQPEALLSVTNNALCFAPLQTFTDEDIMMQKAVKKFAQEQIAPLVSTMDENSKMEKSVIQGLFQQGMMGIEVEAKYGGTEASFLCSVLVIEELAKVDASVALLCDIQNTVINKLFRKHGTEEQKATYLPKLVTEKLGSFCLSEAGAGSDSFALKTRADKSGNYYVINGSKMWISNAEHAELFLVFANVDPPSGYRGITCFLVDRDTEGFQIGRRENKMGIRASSTCQLTFENVKVPETSVLGKIGHGYKYAIGSLNEGRIGIAAQMLGLAQGCFDYTIPYIKERMQFGKRIFDFQGLQHQVAHVATQLEAARLLTYNAARLVEAGRPFIKEASMAKYYASEVAGLTTSKCIEWMGGVGYTKDYPVEKFFRDAKIGTIYEGTSNIQLNTIAKHIDAEY</sequence>
<name>ACDSB_RAT</name>